<protein>
    <recommendedName>
        <fullName evidence="1">Large ribosomal subunit protein uL23</fullName>
    </recommendedName>
    <alternativeName>
        <fullName evidence="2">50S ribosomal protein L23</fullName>
    </alternativeName>
</protein>
<feature type="chain" id="PRO_1000144539" description="Large ribosomal subunit protein uL23">
    <location>
        <begin position="1"/>
        <end position="104"/>
    </location>
</feature>
<gene>
    <name evidence="1" type="primary">rplW</name>
    <name type="ordered locus">Bcenmc03_0329</name>
</gene>
<reference key="1">
    <citation type="submission" date="2008-02" db="EMBL/GenBank/DDBJ databases">
        <title>Complete sequence of chromosome 1 of Burkholderia cenocepacia MC0-3.</title>
        <authorList>
            <person name="Copeland A."/>
            <person name="Lucas S."/>
            <person name="Lapidus A."/>
            <person name="Barry K."/>
            <person name="Bruce D."/>
            <person name="Goodwin L."/>
            <person name="Glavina del Rio T."/>
            <person name="Dalin E."/>
            <person name="Tice H."/>
            <person name="Pitluck S."/>
            <person name="Chain P."/>
            <person name="Malfatti S."/>
            <person name="Shin M."/>
            <person name="Vergez L."/>
            <person name="Schmutz J."/>
            <person name="Larimer F."/>
            <person name="Land M."/>
            <person name="Hauser L."/>
            <person name="Kyrpides N."/>
            <person name="Mikhailova N."/>
            <person name="Tiedje J."/>
            <person name="Richardson P."/>
        </authorList>
    </citation>
    <scope>NUCLEOTIDE SEQUENCE [LARGE SCALE GENOMIC DNA]</scope>
    <source>
        <strain>MC0-3</strain>
    </source>
</reference>
<evidence type="ECO:0000255" key="1">
    <source>
        <dbReference type="HAMAP-Rule" id="MF_01369"/>
    </source>
</evidence>
<evidence type="ECO:0000305" key="2"/>
<accession>B1JU24</accession>
<keyword id="KW-0687">Ribonucleoprotein</keyword>
<keyword id="KW-0689">Ribosomal protein</keyword>
<keyword id="KW-0694">RNA-binding</keyword>
<keyword id="KW-0699">rRNA-binding</keyword>
<dbReference type="EMBL" id="CP000958">
    <property type="protein sequence ID" value="ACA89509.1"/>
    <property type="molecule type" value="Genomic_DNA"/>
</dbReference>
<dbReference type="RefSeq" id="WP_004199275.1">
    <property type="nucleotide sequence ID" value="NC_010508.1"/>
</dbReference>
<dbReference type="SMR" id="B1JU24"/>
<dbReference type="GeneID" id="98107158"/>
<dbReference type="KEGG" id="bcm:Bcenmc03_0329"/>
<dbReference type="HOGENOM" id="CLU_037562_3_1_4"/>
<dbReference type="Proteomes" id="UP000002169">
    <property type="component" value="Chromosome 1"/>
</dbReference>
<dbReference type="GO" id="GO:1990904">
    <property type="term" value="C:ribonucleoprotein complex"/>
    <property type="evidence" value="ECO:0007669"/>
    <property type="project" value="UniProtKB-KW"/>
</dbReference>
<dbReference type="GO" id="GO:0005840">
    <property type="term" value="C:ribosome"/>
    <property type="evidence" value="ECO:0007669"/>
    <property type="project" value="UniProtKB-KW"/>
</dbReference>
<dbReference type="GO" id="GO:0019843">
    <property type="term" value="F:rRNA binding"/>
    <property type="evidence" value="ECO:0007669"/>
    <property type="project" value="UniProtKB-UniRule"/>
</dbReference>
<dbReference type="GO" id="GO:0003735">
    <property type="term" value="F:structural constituent of ribosome"/>
    <property type="evidence" value="ECO:0007669"/>
    <property type="project" value="InterPro"/>
</dbReference>
<dbReference type="GO" id="GO:0006412">
    <property type="term" value="P:translation"/>
    <property type="evidence" value="ECO:0007669"/>
    <property type="project" value="UniProtKB-UniRule"/>
</dbReference>
<dbReference type="FunFam" id="3.30.70.330:FF:000001">
    <property type="entry name" value="50S ribosomal protein L23"/>
    <property type="match status" value="1"/>
</dbReference>
<dbReference type="Gene3D" id="3.30.70.330">
    <property type="match status" value="1"/>
</dbReference>
<dbReference type="HAMAP" id="MF_01369_B">
    <property type="entry name" value="Ribosomal_uL23_B"/>
    <property type="match status" value="1"/>
</dbReference>
<dbReference type="InterPro" id="IPR012677">
    <property type="entry name" value="Nucleotide-bd_a/b_plait_sf"/>
</dbReference>
<dbReference type="InterPro" id="IPR013025">
    <property type="entry name" value="Ribosomal_uL23-like"/>
</dbReference>
<dbReference type="InterPro" id="IPR012678">
    <property type="entry name" value="Ribosomal_uL23/eL15/eS24_sf"/>
</dbReference>
<dbReference type="NCBIfam" id="NF004359">
    <property type="entry name" value="PRK05738.1-3"/>
    <property type="match status" value="1"/>
</dbReference>
<dbReference type="NCBIfam" id="NF004363">
    <property type="entry name" value="PRK05738.2-4"/>
    <property type="match status" value="1"/>
</dbReference>
<dbReference type="PANTHER" id="PTHR11620">
    <property type="entry name" value="60S RIBOSOMAL PROTEIN L23A"/>
    <property type="match status" value="1"/>
</dbReference>
<dbReference type="Pfam" id="PF00276">
    <property type="entry name" value="Ribosomal_L23"/>
    <property type="match status" value="1"/>
</dbReference>
<dbReference type="SUPFAM" id="SSF54189">
    <property type="entry name" value="Ribosomal proteins S24e, L23 and L15e"/>
    <property type="match status" value="1"/>
</dbReference>
<organism>
    <name type="scientific">Burkholderia orbicola (strain MC0-3)</name>
    <dbReference type="NCBI Taxonomy" id="406425"/>
    <lineage>
        <taxon>Bacteria</taxon>
        <taxon>Pseudomonadati</taxon>
        <taxon>Pseudomonadota</taxon>
        <taxon>Betaproteobacteria</taxon>
        <taxon>Burkholderiales</taxon>
        <taxon>Burkholderiaceae</taxon>
        <taxon>Burkholderia</taxon>
        <taxon>Burkholderia cepacia complex</taxon>
        <taxon>Burkholderia orbicola</taxon>
    </lineage>
</organism>
<comment type="function">
    <text evidence="1">One of the early assembly proteins it binds 23S rRNA. One of the proteins that surrounds the polypeptide exit tunnel on the outside of the ribosome. Forms the main docking site for trigger factor binding to the ribosome.</text>
</comment>
<comment type="subunit">
    <text evidence="1">Part of the 50S ribosomal subunit. Contacts protein L29, and trigger factor when it is bound to the ribosome.</text>
</comment>
<comment type="similarity">
    <text evidence="1">Belongs to the universal ribosomal protein uL23 family.</text>
</comment>
<proteinExistence type="inferred from homology"/>
<sequence>MSEIRKNDHRLMQVLLAPVISEKATLVADKNEQVVFEVAPDATKQEVKAAVELLFKVEVDSVNVLVQKGKQKRFGRSMGRRKDVKKAYVCLKPGQEINFEAEAK</sequence>
<name>RL23_BURO0</name>